<dbReference type="EC" id="4.2.2.3" evidence="2"/>
<dbReference type="EC" id="5.1.3.37" evidence="3 6"/>
<dbReference type="EMBL" id="AF099800">
    <property type="protein sequence ID" value="AAD04921.1"/>
    <property type="molecule type" value="Genomic_DNA"/>
</dbReference>
<dbReference type="RefSeq" id="WP_012703560.1">
    <property type="nucleotide sequence ID" value="NZ_FPKM01000015.1"/>
</dbReference>
<dbReference type="SMR" id="Q9ZFG9"/>
<dbReference type="OMA" id="ISVENNH"/>
<dbReference type="BRENDA" id="4.2.2.3">
    <property type="organism ID" value="49"/>
</dbReference>
<dbReference type="BRENDA" id="5.1.3.37">
    <property type="organism ID" value="49"/>
</dbReference>
<dbReference type="UniPathway" id="UPA00286"/>
<dbReference type="GO" id="GO:0005615">
    <property type="term" value="C:extracellular space"/>
    <property type="evidence" value="ECO:0007669"/>
    <property type="project" value="InterPro"/>
</dbReference>
<dbReference type="GO" id="GO:0005509">
    <property type="term" value="F:calcium ion binding"/>
    <property type="evidence" value="ECO:0007669"/>
    <property type="project" value="InterPro"/>
</dbReference>
<dbReference type="GO" id="GO:0016853">
    <property type="term" value="F:isomerase activity"/>
    <property type="evidence" value="ECO:0007669"/>
    <property type="project" value="UniProtKB-KW"/>
</dbReference>
<dbReference type="GO" id="GO:0045135">
    <property type="term" value="F:poly(beta-D-mannuronate) lyase activity"/>
    <property type="evidence" value="ECO:0007669"/>
    <property type="project" value="UniProtKB-EC"/>
</dbReference>
<dbReference type="GO" id="GO:0042121">
    <property type="term" value="P:alginic acid biosynthetic process"/>
    <property type="evidence" value="ECO:0007669"/>
    <property type="project" value="UniProtKB-UniPathway"/>
</dbReference>
<dbReference type="Gene3D" id="2.150.10.10">
    <property type="entry name" value="Serralysin-like metalloprotease, C-terminal"/>
    <property type="match status" value="2"/>
</dbReference>
<dbReference type="Gene3D" id="2.160.20.10">
    <property type="entry name" value="Single-stranded right-handed beta-helix, Pectin lyase-like"/>
    <property type="match status" value="1"/>
</dbReference>
<dbReference type="InterPro" id="IPR006633">
    <property type="entry name" value="Carb-bd_sugar_hydrolysis-dom"/>
</dbReference>
<dbReference type="InterPro" id="IPR018511">
    <property type="entry name" value="Hemolysin-typ_Ca-bd_CS"/>
</dbReference>
<dbReference type="InterPro" id="IPR001343">
    <property type="entry name" value="Hemolysn_Ca-bd"/>
</dbReference>
<dbReference type="InterPro" id="IPR006626">
    <property type="entry name" value="PbH1"/>
</dbReference>
<dbReference type="InterPro" id="IPR012334">
    <property type="entry name" value="Pectin_lyas_fold"/>
</dbReference>
<dbReference type="InterPro" id="IPR011050">
    <property type="entry name" value="Pectin_lyase_fold/virulence"/>
</dbReference>
<dbReference type="InterPro" id="IPR013858">
    <property type="entry name" value="Peptidase_M10B_C"/>
</dbReference>
<dbReference type="InterPro" id="IPR024535">
    <property type="entry name" value="RHGA/B-epi-like_pectate_lyase"/>
</dbReference>
<dbReference type="InterPro" id="IPR050557">
    <property type="entry name" value="RTX_toxin/Mannuronan_C5-epim"/>
</dbReference>
<dbReference type="InterPro" id="IPR011049">
    <property type="entry name" value="Serralysin-like_metalloprot_C"/>
</dbReference>
<dbReference type="PANTHER" id="PTHR38340">
    <property type="entry name" value="S-LAYER PROTEIN"/>
    <property type="match status" value="1"/>
</dbReference>
<dbReference type="PANTHER" id="PTHR38340:SF1">
    <property type="entry name" value="S-LAYER PROTEIN"/>
    <property type="match status" value="1"/>
</dbReference>
<dbReference type="Pfam" id="PF00353">
    <property type="entry name" value="HemolysinCabind"/>
    <property type="match status" value="4"/>
</dbReference>
<dbReference type="Pfam" id="PF12708">
    <property type="entry name" value="Pect-lyase_RHGA_epim"/>
    <property type="match status" value="1"/>
</dbReference>
<dbReference type="Pfam" id="PF08548">
    <property type="entry name" value="Peptidase_M10_C"/>
    <property type="match status" value="3"/>
</dbReference>
<dbReference type="PRINTS" id="PR00313">
    <property type="entry name" value="CABNDNGRPT"/>
</dbReference>
<dbReference type="SMART" id="SM00722">
    <property type="entry name" value="CASH"/>
    <property type="match status" value="2"/>
</dbReference>
<dbReference type="SMART" id="SM00710">
    <property type="entry name" value="PbH1"/>
    <property type="match status" value="8"/>
</dbReference>
<dbReference type="SUPFAM" id="SSF51120">
    <property type="entry name" value="beta-Roll"/>
    <property type="match status" value="3"/>
</dbReference>
<dbReference type="SUPFAM" id="SSF51126">
    <property type="entry name" value="Pectin lyase-like"/>
    <property type="match status" value="1"/>
</dbReference>
<dbReference type="PROSITE" id="PS00330">
    <property type="entry name" value="HEMOLYSIN_CALCIUM"/>
    <property type="match status" value="6"/>
</dbReference>
<sequence length="856" mass="90364">MEYNVKDFGAKGDGKTDDTDAIQAAIDAAHKAGGGTVYLPSGEYRVSGGDEASDGALIIKSNVYIVGAGMGETVIKLVDGWDEKLTGIIRSANGEKTHDYGISDLTIDGNQDNTEGEVDGFYTGYIPGKNGADYNVTVERVEIREVSRYAFDPHEQTINLTIRDSVAHDNGKDGFVADFQIGAVFENNVSYNNGRHGFNIVTSSHDIVFTNNVAYGNGANGLVVQRGSEDRDFVYNVEIEGGSFHDNGQEGVLIKMSTDVTLQGAEIYGNGYAGVRVQGVEDVRILDNYIHDNAQSKANAEVIVESYDDRDGPSDDYYETQNVTVKGNTIVGSANSTYGIQERADGTDYTSIGNNSVSGTQRGIVQLSGTNSTFSGRSGDAYQFIDGSTGNDLLTGTPIADLIVGGSGNDTLSGDAGNDVLEGGAGSDRLTGGEGADIFRFTAVSDSYYTASSSVADQILDFDASNDRIDLTGLGFTGLGDGYGGTLAVLANSDGSRTYLRSYEKDADGRYFSLTLDGNFVGRLDDSNLVFRHKTIAGTEGDDSLTGNAMAEILDGGSGNDSLAGGLGNDVLRGGAGDDILNGGLGRDQLSGGEGADIFRFTSVADSYQNSGDNFSDLILDFDPGEDRIDLSGLGFSGLGDGHNGTLLLWTSSETNRTYLKNFDTDADGRRFEIALEGVFSDLSEKQLVFERLVLEGTRLGDQLSGTELNEELLGGAGRDILNGGAGDDILDGGSERDTLTGGSGADVFRFNATLDSFRNYDNGTSRVDDITDFTVGEDLIDLSALGYSGLGNGYDGTLAVLLNADGTKTYLKDRESDADGNHFEIALDGNYADQLSNGDFIFTNLEVIGSSSQAA</sequence>
<feature type="chain" id="PRO_0000219561" description="Alginate lyase 7">
    <location>
        <begin position="1"/>
        <end position="856"/>
    </location>
</feature>
<feature type="repeat" description="PbH1 1" evidence="1">
    <location>
        <begin position="133"/>
        <end position="155"/>
    </location>
</feature>
<feature type="repeat" description="PbH1 2" evidence="1">
    <location>
        <begin position="157"/>
        <end position="179"/>
    </location>
</feature>
<feature type="repeat" description="PbH1 3" evidence="1">
    <location>
        <begin position="180"/>
        <end position="202"/>
    </location>
</feature>
<feature type="repeat" description="PbH1 4" evidence="1">
    <location>
        <begin position="204"/>
        <end position="226"/>
    </location>
</feature>
<feature type="repeat" description="PbH1 5" evidence="1">
    <location>
        <begin position="234"/>
        <end position="256"/>
    </location>
</feature>
<feature type="repeat" description="PbH1 6" evidence="1">
    <location>
        <begin position="257"/>
        <end position="279"/>
    </location>
</feature>
<feature type="repeat" description="PbH1 7" evidence="1">
    <location>
        <begin position="280"/>
        <end position="304"/>
    </location>
</feature>
<feature type="repeat" description="PbH1 8" evidence="1">
    <location>
        <begin position="320"/>
        <end position="342"/>
    </location>
</feature>
<feature type="repeat" description="Hemolysin-type calcium-binding 1" evidence="1">
    <location>
        <begin position="387"/>
        <end position="402"/>
    </location>
</feature>
<feature type="repeat" description="Hemolysin-type calcium-binding 2" evidence="1">
    <location>
        <begin position="404"/>
        <end position="421"/>
    </location>
</feature>
<feature type="repeat" description="Hemolysin-type calcium-binding 3" evidence="1">
    <location>
        <begin position="422"/>
        <end position="439"/>
    </location>
</feature>
<feature type="repeat" description="Hemolysin-type calcium-binding 4" evidence="1">
    <location>
        <begin position="538"/>
        <end position="549"/>
    </location>
</feature>
<feature type="repeat" description="Hemolysin-type calcium-binding 5" evidence="1">
    <location>
        <begin position="554"/>
        <end position="563"/>
    </location>
</feature>
<feature type="repeat" description="Hemolysin-type calcium-binding 6" evidence="1">
    <location>
        <begin position="565"/>
        <end position="581"/>
    </location>
</feature>
<feature type="repeat" description="Hemolysin-type calcium-binding 7" evidence="1">
    <location>
        <begin position="582"/>
        <end position="599"/>
    </location>
</feature>
<feature type="repeat" description="Hemolysin-type calcium-binding 8" evidence="1">
    <location>
        <begin position="715"/>
        <end position="731"/>
    </location>
</feature>
<feature type="repeat" description="Hemolysin-type calcium-binding 9" evidence="1">
    <location>
        <begin position="733"/>
        <end position="749"/>
    </location>
</feature>
<feature type="mutagenesis site" description="Loss of both epimerase and lyase functions." evidence="2">
    <original>D</original>
    <variation>G</variation>
    <location>
        <position position="152"/>
    </location>
</feature>
<protein>
    <recommendedName>
        <fullName evidence="5">Alginate lyase 7</fullName>
        <ecNumber evidence="2">4.2.2.3</ecNumber>
    </recommendedName>
    <alternativeName>
        <fullName evidence="5">Mannuronan C5-epimerase AlgE7</fullName>
        <ecNumber evidence="3 6">5.1.3.37</ecNumber>
    </alternativeName>
    <alternativeName>
        <fullName>Poly(beta-D-mannuronate) C5 epimerase 7</fullName>
    </alternativeName>
    <alternativeName>
        <fullName>Poly(beta-D-mannuronate) lyase 7</fullName>
    </alternativeName>
    <alternativeName>
        <fullName>Poly(mana) alginate lyase 7</fullName>
    </alternativeName>
</protein>
<keyword id="KW-0016">Alginate biosynthesis</keyword>
<keyword id="KW-0106">Calcium</keyword>
<keyword id="KW-0413">Isomerase</keyword>
<keyword id="KW-0456">Lyase</keyword>
<keyword id="KW-0677">Repeat</keyword>
<keyword id="KW-0964">Secreted</keyword>
<comment type="function">
    <text evidence="2 3">Converts beta-D-mannuronic acid (M) to alpha-L-guluronic acid (G). Has both epimerase and lyase activities. Contributes to abortive encystment by degrading the coat from inside the cyst. Important for cyst germination.</text>
</comment>
<comment type="catalytic activity">
    <reaction evidence="2">
        <text>Eliminative cleavage of alginate to give oligosaccharides with 4-deoxy-alpha-L-erythro-hex-4-enuronosyl groups at their non-reducing ends and beta-D-mannuronate at their reducing end.</text>
        <dbReference type="EC" id="4.2.2.3"/>
    </reaction>
</comment>
<comment type="catalytic activity">
    <reaction evidence="3 6">
        <text>[(1-&gt;4)-beta-D-mannuronosyl](n) = [alginate](n)</text>
        <dbReference type="Rhea" id="RHEA:45572"/>
        <dbReference type="Rhea" id="RHEA-COMP:11264"/>
        <dbReference type="Rhea" id="RHEA-COMP:11270"/>
        <dbReference type="ChEBI" id="CHEBI:58187"/>
        <dbReference type="ChEBI" id="CHEBI:85311"/>
        <dbReference type="EC" id="5.1.3.37"/>
    </reaction>
</comment>
<comment type="cofactor">
    <cofactor>
        <name>Ca(2+)</name>
        <dbReference type="ChEBI" id="CHEBI:29108"/>
    </cofactor>
</comment>
<comment type="activity regulation">
    <text>Inhibited by zinc.</text>
</comment>
<comment type="pathway">
    <text>Glycan biosynthesis; alginate biosynthesis.</text>
</comment>
<comment type="subcellular location">
    <subcellularLocation>
        <location>Secreted</location>
    </subcellularLocation>
    <text>Probably exported via the hemolysin-type secretion pathway.</text>
</comment>
<comment type="developmental stage">
    <text>Produced mainly in germinating cells.</text>
</comment>
<comment type="domain">
    <text>Composed of one catalytically active A module and three R modules.</text>
</comment>
<comment type="miscellaneous">
    <text>Each enzyme of this family of C5 epimerases introduces its own characteristic sequence distribution of G-blocks in their substrates, explaining the extensive sequence variability of alginates. These alginates of varying composition have different physical properties and are necessary at different stages of the bacterium life cycle.</text>
</comment>
<comment type="similarity">
    <text evidence="5">Belongs to the D-mannuronate C5-epimerase family.</text>
</comment>
<accession>Q9ZFG9</accession>
<name>ALGE7_AZOVI</name>
<organism>
    <name type="scientific">Azotobacter vinelandii</name>
    <dbReference type="NCBI Taxonomy" id="354"/>
    <lineage>
        <taxon>Bacteria</taxon>
        <taxon>Pseudomonadati</taxon>
        <taxon>Pseudomonadota</taxon>
        <taxon>Gammaproteobacteria</taxon>
        <taxon>Pseudomonadales</taxon>
        <taxon>Pseudomonadaceae</taxon>
        <taxon>Azotobacter</taxon>
    </lineage>
</organism>
<proteinExistence type="evidence at protein level"/>
<reference key="1">
    <citation type="journal article" date="1999" name="J. Bacteriol.">
        <title>Cloning and expression of three new Azotobacter vinelandii genes closely related to a previously described gene family encoding mannuronan C-5-epimerases.</title>
        <authorList>
            <person name="Glaerum Svanem B.I."/>
            <person name="Skjaak-Braek G."/>
            <person name="Ertesvaag H."/>
            <person name="Valla S."/>
        </authorList>
    </citation>
    <scope>NUCLEOTIDE SEQUENCE [GENOMIC DNA]</scope>
    <scope>FUNCTION</scope>
    <scope>CATALYTIC ACTIVITY</scope>
    <source>
        <strain>E</strain>
    </source>
</reference>
<reference key="2">
    <citation type="journal article" date="2000" name="Environ. Microbiol.">
        <title>Mannuronan C-5 epimerases and cellular differentiation of Azotobacter vinelandii.</title>
        <authorList>
            <person name="Hoeidal H.K."/>
            <person name="Glaerum Svanem B.I."/>
            <person name="Gimmestad M."/>
            <person name="Valla S."/>
        </authorList>
    </citation>
    <scope>EXPRESSION</scope>
    <source>
        <strain>E</strain>
    </source>
</reference>
<reference key="3">
    <citation type="journal article" date="2001" name="J. Biol. Chem.">
        <title>The catalytic activities of the bifunctional Azotobacter vinelandii mannuronan C-5-epimerase and alginate lyase AlgE7 probably originate from the same active site in the enzyme.</title>
        <authorList>
            <person name="Glaerum Svanem B.I."/>
            <person name="Strand W.I."/>
            <person name="Ertesvaag H."/>
            <person name="Skjaak-Braek G."/>
            <person name="Hartmann M."/>
            <person name="Barbeyron T."/>
            <person name="Valla S."/>
        </authorList>
    </citation>
    <scope>FUNCTION</scope>
    <scope>CATALYTIC ACTIVITY</scope>
    <scope>MUTAGENESIS OF ASP-152</scope>
    <scope>SUBSTRATE SPECIFICITY</scope>
    <source>
        <strain>E</strain>
    </source>
</reference>
<reference key="4">
    <citation type="journal article" date="1999" name="Metab. Eng.">
        <title>Mannuronan C-5-epimerases and their application for in vitro and in vivo design of new alginates useful in biotechnology.</title>
        <authorList>
            <person name="Ertesvaag H."/>
            <person name="Hoeidal H.K."/>
            <person name="Schjerven H."/>
            <person name="Glaerum Svanem B.I."/>
            <person name="Valla S."/>
        </authorList>
    </citation>
    <scope>REVIEW</scope>
</reference>
<gene>
    <name evidence="4" type="primary">algE7</name>
</gene>
<evidence type="ECO:0000255" key="1"/>
<evidence type="ECO:0000269" key="2">
    <source>
    </source>
</evidence>
<evidence type="ECO:0000269" key="3">
    <source>
    </source>
</evidence>
<evidence type="ECO:0000303" key="4">
    <source>
    </source>
</evidence>
<evidence type="ECO:0000305" key="5"/>
<evidence type="ECO:0000305" key="6">
    <source>
    </source>
</evidence>